<feature type="chain" id="PRO_1000096545" description="Triosephosphate isomerase">
    <location>
        <begin position="1"/>
        <end position="249"/>
    </location>
</feature>
<feature type="active site" description="Electrophile" evidence="1">
    <location>
        <position position="94"/>
    </location>
</feature>
<feature type="active site" description="Proton acceptor" evidence="1">
    <location>
        <position position="166"/>
    </location>
</feature>
<feature type="binding site" evidence="1">
    <location>
        <begin position="9"/>
        <end position="11"/>
    </location>
    <ligand>
        <name>substrate</name>
    </ligand>
</feature>
<feature type="binding site" evidence="1">
    <location>
        <position position="172"/>
    </location>
    <ligand>
        <name>substrate</name>
    </ligand>
</feature>
<feature type="binding site" evidence="1">
    <location>
        <position position="212"/>
    </location>
    <ligand>
        <name>substrate</name>
    </ligand>
</feature>
<feature type="binding site" evidence="1">
    <location>
        <begin position="233"/>
        <end position="234"/>
    </location>
    <ligand>
        <name>substrate</name>
    </ligand>
</feature>
<proteinExistence type="inferred from homology"/>
<gene>
    <name evidence="1" type="primary">tpiA</name>
    <name type="ordered locus">TPASS_0537</name>
</gene>
<evidence type="ECO:0000255" key="1">
    <source>
        <dbReference type="HAMAP-Rule" id="MF_00147"/>
    </source>
</evidence>
<organism>
    <name type="scientific">Treponema pallidum subsp. pallidum (strain SS14)</name>
    <dbReference type="NCBI Taxonomy" id="455434"/>
    <lineage>
        <taxon>Bacteria</taxon>
        <taxon>Pseudomonadati</taxon>
        <taxon>Spirochaetota</taxon>
        <taxon>Spirochaetia</taxon>
        <taxon>Spirochaetales</taxon>
        <taxon>Treponemataceae</taxon>
        <taxon>Treponema</taxon>
    </lineage>
</organism>
<reference key="1">
    <citation type="journal article" date="2008" name="BMC Microbiol.">
        <title>Complete genome sequence of Treponema pallidum ssp. pallidum strain SS14 determined with oligonucleotide arrays.</title>
        <authorList>
            <person name="Matejkova P."/>
            <person name="Strouhal M."/>
            <person name="Smajs D."/>
            <person name="Norris S.J."/>
            <person name="Palzkill T."/>
            <person name="Petrosino J.F."/>
            <person name="Sodergren E."/>
            <person name="Norton J.E."/>
            <person name="Singh J."/>
            <person name="Richmond T.A."/>
            <person name="Molla M.N."/>
            <person name="Albert T.J."/>
            <person name="Weinstock G.M."/>
        </authorList>
    </citation>
    <scope>NUCLEOTIDE SEQUENCE [LARGE SCALE GENOMIC DNA]</scope>
    <source>
        <strain>SS14</strain>
    </source>
</reference>
<protein>
    <recommendedName>
        <fullName evidence="1">Triosephosphate isomerase</fullName>
        <shortName evidence="1">TIM</shortName>
        <shortName evidence="1">TPI</shortName>
        <ecNumber evidence="1">5.3.1.1</ecNumber>
    </recommendedName>
    <alternativeName>
        <fullName evidence="1">Triose-phosphate isomerase</fullName>
    </alternativeName>
</protein>
<comment type="function">
    <text evidence="1">Involved in the gluconeogenesis. Catalyzes stereospecifically the conversion of dihydroxyacetone phosphate (DHAP) to D-glyceraldehyde-3-phosphate (G3P).</text>
</comment>
<comment type="catalytic activity">
    <reaction evidence="1">
        <text>D-glyceraldehyde 3-phosphate = dihydroxyacetone phosphate</text>
        <dbReference type="Rhea" id="RHEA:18585"/>
        <dbReference type="ChEBI" id="CHEBI:57642"/>
        <dbReference type="ChEBI" id="CHEBI:59776"/>
        <dbReference type="EC" id="5.3.1.1"/>
    </reaction>
</comment>
<comment type="pathway">
    <text evidence="1">Carbohydrate biosynthesis; gluconeogenesis.</text>
</comment>
<comment type="pathway">
    <text evidence="1">Carbohydrate degradation; glycolysis; D-glyceraldehyde 3-phosphate from glycerone phosphate: step 1/1.</text>
</comment>
<comment type="subunit">
    <text evidence="1">Homodimer.</text>
</comment>
<comment type="subcellular location">
    <subcellularLocation>
        <location evidence="1">Cytoplasm</location>
    </subcellularLocation>
</comment>
<comment type="similarity">
    <text evidence="1">Belongs to the triosephosphate isomerase family.</text>
</comment>
<accession>B2S3C9</accession>
<sequence>MRGYFIAGNWKMHKTCAEAVALAQELVRELRGGPHTYMIAPSFTALDAVGKVLRGSNVLLGAQDVSSEEWGAHTGEVSVLQLEDLGVQVVIVGHSERRHGRGENDKLINQKVRRVLESGLRVILCVGERLQEYEAGCTNEVVGTQVRAGMADVCGSLMHNVTVAYEPVWAIGTGKTATPAQANAVHAHIRSVVREMYGAAIAEALCIQYGGSMKAENARALLAEEHIDGGLIGGASLEAASFVPIARSV</sequence>
<name>TPIS_TREPS</name>
<dbReference type="EC" id="5.3.1.1" evidence="1"/>
<dbReference type="EMBL" id="CP000805">
    <property type="protein sequence ID" value="ACD70958.1"/>
    <property type="molecule type" value="Genomic_DNA"/>
</dbReference>
<dbReference type="RefSeq" id="WP_010881984.1">
    <property type="nucleotide sequence ID" value="NC_021508.1"/>
</dbReference>
<dbReference type="SMR" id="B2S3C9"/>
<dbReference type="GeneID" id="93876306"/>
<dbReference type="KEGG" id="tpp:TPASS_0537"/>
<dbReference type="PATRIC" id="fig|455434.6.peg.535"/>
<dbReference type="UniPathway" id="UPA00109">
    <property type="reaction ID" value="UER00189"/>
</dbReference>
<dbReference type="UniPathway" id="UPA00138"/>
<dbReference type="Proteomes" id="UP000001202">
    <property type="component" value="Chromosome"/>
</dbReference>
<dbReference type="GO" id="GO:0005829">
    <property type="term" value="C:cytosol"/>
    <property type="evidence" value="ECO:0007669"/>
    <property type="project" value="TreeGrafter"/>
</dbReference>
<dbReference type="GO" id="GO:0004807">
    <property type="term" value="F:triose-phosphate isomerase activity"/>
    <property type="evidence" value="ECO:0007669"/>
    <property type="project" value="UniProtKB-UniRule"/>
</dbReference>
<dbReference type="GO" id="GO:0006094">
    <property type="term" value="P:gluconeogenesis"/>
    <property type="evidence" value="ECO:0007669"/>
    <property type="project" value="UniProtKB-UniRule"/>
</dbReference>
<dbReference type="GO" id="GO:0046166">
    <property type="term" value="P:glyceraldehyde-3-phosphate biosynthetic process"/>
    <property type="evidence" value="ECO:0007669"/>
    <property type="project" value="TreeGrafter"/>
</dbReference>
<dbReference type="GO" id="GO:0019563">
    <property type="term" value="P:glycerol catabolic process"/>
    <property type="evidence" value="ECO:0007669"/>
    <property type="project" value="TreeGrafter"/>
</dbReference>
<dbReference type="GO" id="GO:0006096">
    <property type="term" value="P:glycolytic process"/>
    <property type="evidence" value="ECO:0007669"/>
    <property type="project" value="UniProtKB-UniRule"/>
</dbReference>
<dbReference type="CDD" id="cd00311">
    <property type="entry name" value="TIM"/>
    <property type="match status" value="1"/>
</dbReference>
<dbReference type="FunFam" id="3.20.20.70:FF:000016">
    <property type="entry name" value="Triosephosphate isomerase"/>
    <property type="match status" value="1"/>
</dbReference>
<dbReference type="Gene3D" id="3.20.20.70">
    <property type="entry name" value="Aldolase class I"/>
    <property type="match status" value="1"/>
</dbReference>
<dbReference type="HAMAP" id="MF_00147_B">
    <property type="entry name" value="TIM_B"/>
    <property type="match status" value="1"/>
</dbReference>
<dbReference type="InterPro" id="IPR013785">
    <property type="entry name" value="Aldolase_TIM"/>
</dbReference>
<dbReference type="InterPro" id="IPR035990">
    <property type="entry name" value="TIM_sf"/>
</dbReference>
<dbReference type="InterPro" id="IPR022896">
    <property type="entry name" value="TrioseP_Isoase_bac/euk"/>
</dbReference>
<dbReference type="InterPro" id="IPR000652">
    <property type="entry name" value="Triosephosphate_isomerase"/>
</dbReference>
<dbReference type="InterPro" id="IPR020861">
    <property type="entry name" value="Triosephosphate_isomerase_AS"/>
</dbReference>
<dbReference type="NCBIfam" id="TIGR00419">
    <property type="entry name" value="tim"/>
    <property type="match status" value="1"/>
</dbReference>
<dbReference type="PANTHER" id="PTHR21139">
    <property type="entry name" value="TRIOSEPHOSPHATE ISOMERASE"/>
    <property type="match status" value="1"/>
</dbReference>
<dbReference type="PANTHER" id="PTHR21139:SF42">
    <property type="entry name" value="TRIOSEPHOSPHATE ISOMERASE"/>
    <property type="match status" value="1"/>
</dbReference>
<dbReference type="Pfam" id="PF00121">
    <property type="entry name" value="TIM"/>
    <property type="match status" value="1"/>
</dbReference>
<dbReference type="SUPFAM" id="SSF51351">
    <property type="entry name" value="Triosephosphate isomerase (TIM)"/>
    <property type="match status" value="1"/>
</dbReference>
<dbReference type="PROSITE" id="PS00171">
    <property type="entry name" value="TIM_1"/>
    <property type="match status" value="1"/>
</dbReference>
<dbReference type="PROSITE" id="PS51440">
    <property type="entry name" value="TIM_2"/>
    <property type="match status" value="1"/>
</dbReference>
<keyword id="KW-0963">Cytoplasm</keyword>
<keyword id="KW-0312">Gluconeogenesis</keyword>
<keyword id="KW-0324">Glycolysis</keyword>
<keyword id="KW-0413">Isomerase</keyword>